<protein>
    <recommendedName>
        <fullName evidence="1">Na(+)-translocating NADH-quinone reductase subunit A</fullName>
        <shortName evidence="1">Na(+)-NQR subunit A</shortName>
        <shortName evidence="1">Na(+)-translocating NQR subunit A</shortName>
        <ecNumber evidence="1">7.2.1.1</ecNumber>
    </recommendedName>
    <alternativeName>
        <fullName evidence="1">NQR complex subunit A</fullName>
    </alternativeName>
    <alternativeName>
        <fullName evidence="1">NQR-1 subunit A</fullName>
    </alternativeName>
</protein>
<sequence length="447" mass="48465">MIKIKKGLNLPIAGRPEQVIYDGPAITEVALLGEEYAGMRPSMKVKEGDAVKKGQVLFEDKKNPGVVFTAPASGKIAAIHRGEKRVLQSVVIAVEGNDEIEFDRYAPDALAKLSGKEVRRNLIQSGLWTALRTRPFSKIPAVDAEPFAIFVNAMDTNPLAADPVVVIKEAAEDFRRGLLVLSRLTERKIHVCKAAGADVPSENAANIETHEFGGPHPAGLSGTHIHFIEPVGANKTVWTINYQDVIAIGRLFATGRLNTGRVVALGGSQVNKPRLLRTVLGAKVSQITAGELVDADNRVISGSVLNGAIAQGAHDYLGRYHNQISVIEEGRSKELLGWVAPQPDKYSITRTTLGHFLKNKLFKFNTAVNGGDRAMVPIGTYERVMPLDILPTLLLRDLIVGDTDSAQALGCLELDEEDLALCSFVCPGKYEYGPLLRKVLETIEKEG</sequence>
<reference key="1">
    <citation type="journal article" date="2007" name="PLoS Genet.">
        <title>Meningococcal genetic variation mechanisms viewed through comparative analysis of serogroup C strain FAM18.</title>
        <authorList>
            <person name="Bentley S.D."/>
            <person name="Vernikos G.S."/>
            <person name="Snyder L.A.S."/>
            <person name="Churcher C."/>
            <person name="Arrowsmith C."/>
            <person name="Chillingworth T."/>
            <person name="Cronin A."/>
            <person name="Davis P.H."/>
            <person name="Holroyd N.E."/>
            <person name="Jagels K."/>
            <person name="Maddison M."/>
            <person name="Moule S."/>
            <person name="Rabbinowitsch E."/>
            <person name="Sharp S."/>
            <person name="Unwin L."/>
            <person name="Whitehead S."/>
            <person name="Quail M.A."/>
            <person name="Achtman M."/>
            <person name="Barrell B.G."/>
            <person name="Saunders N.J."/>
            <person name="Parkhill J."/>
        </authorList>
    </citation>
    <scope>NUCLEOTIDE SEQUENCE [LARGE SCALE GENOMIC DNA]</scope>
    <source>
        <strain>ATCC 700532 / DSM 15464 / FAM18</strain>
    </source>
</reference>
<dbReference type="EC" id="7.2.1.1" evidence="1"/>
<dbReference type="EMBL" id="AM421808">
    <property type="protein sequence ID" value="CAM09808.1"/>
    <property type="molecule type" value="Genomic_DNA"/>
</dbReference>
<dbReference type="RefSeq" id="WP_002221362.1">
    <property type="nucleotide sequence ID" value="NC_008767.1"/>
</dbReference>
<dbReference type="SMR" id="A1KSH8"/>
<dbReference type="KEGG" id="nmc:NMC0510"/>
<dbReference type="HOGENOM" id="CLU_046656_0_0_4"/>
<dbReference type="Proteomes" id="UP000002286">
    <property type="component" value="Chromosome"/>
</dbReference>
<dbReference type="GO" id="GO:0016655">
    <property type="term" value="F:oxidoreductase activity, acting on NAD(P)H, quinone or similar compound as acceptor"/>
    <property type="evidence" value="ECO:0007669"/>
    <property type="project" value="UniProtKB-UniRule"/>
</dbReference>
<dbReference type="GO" id="GO:0006814">
    <property type="term" value="P:sodium ion transport"/>
    <property type="evidence" value="ECO:0007669"/>
    <property type="project" value="UniProtKB-UniRule"/>
</dbReference>
<dbReference type="Gene3D" id="2.40.50.100">
    <property type="match status" value="1"/>
</dbReference>
<dbReference type="HAMAP" id="MF_00425">
    <property type="entry name" value="NqrA"/>
    <property type="match status" value="1"/>
</dbReference>
<dbReference type="InterPro" id="IPR008703">
    <property type="entry name" value="NqrA"/>
</dbReference>
<dbReference type="InterPro" id="IPR056148">
    <property type="entry name" value="NQRA_2nd"/>
</dbReference>
<dbReference type="InterPro" id="IPR022615">
    <property type="entry name" value="NqrA_C_domain"/>
</dbReference>
<dbReference type="InterPro" id="IPR056147">
    <property type="entry name" value="NQRA_N"/>
</dbReference>
<dbReference type="NCBIfam" id="TIGR01936">
    <property type="entry name" value="nqrA"/>
    <property type="match status" value="1"/>
</dbReference>
<dbReference type="NCBIfam" id="NF003759">
    <property type="entry name" value="PRK05352.1-2"/>
    <property type="match status" value="1"/>
</dbReference>
<dbReference type="NCBIfam" id="NF003761">
    <property type="entry name" value="PRK05352.1-4"/>
    <property type="match status" value="1"/>
</dbReference>
<dbReference type="PANTHER" id="PTHR37839">
    <property type="entry name" value="NA(+)-TRANSLOCATING NADH-QUINONE REDUCTASE SUBUNIT A"/>
    <property type="match status" value="1"/>
</dbReference>
<dbReference type="PANTHER" id="PTHR37839:SF1">
    <property type="entry name" value="NA(+)-TRANSLOCATING NADH-QUINONE REDUCTASE SUBUNIT A"/>
    <property type="match status" value="1"/>
</dbReference>
<dbReference type="Pfam" id="PF24836">
    <property type="entry name" value="NQRA_2nd"/>
    <property type="match status" value="1"/>
</dbReference>
<dbReference type="Pfam" id="PF05896">
    <property type="entry name" value="NQRA_N"/>
    <property type="match status" value="1"/>
</dbReference>
<dbReference type="Pfam" id="PF11973">
    <property type="entry name" value="NQRA_SLBB"/>
    <property type="match status" value="1"/>
</dbReference>
<proteinExistence type="inferred from homology"/>
<keyword id="KW-0406">Ion transport</keyword>
<keyword id="KW-0520">NAD</keyword>
<keyword id="KW-0915">Sodium</keyword>
<keyword id="KW-0739">Sodium transport</keyword>
<keyword id="KW-1278">Translocase</keyword>
<keyword id="KW-0813">Transport</keyword>
<keyword id="KW-0830">Ubiquinone</keyword>
<feature type="chain" id="PRO_1000060121" description="Na(+)-translocating NADH-quinone reductase subunit A">
    <location>
        <begin position="1"/>
        <end position="447"/>
    </location>
</feature>
<gene>
    <name evidence="1" type="primary">nqrA</name>
    <name type="ordered locus">NMC0510</name>
</gene>
<accession>A1KSH8</accession>
<organism>
    <name type="scientific">Neisseria meningitidis serogroup C / serotype 2a (strain ATCC 700532 / DSM 15464 / FAM18)</name>
    <dbReference type="NCBI Taxonomy" id="272831"/>
    <lineage>
        <taxon>Bacteria</taxon>
        <taxon>Pseudomonadati</taxon>
        <taxon>Pseudomonadota</taxon>
        <taxon>Betaproteobacteria</taxon>
        <taxon>Neisseriales</taxon>
        <taxon>Neisseriaceae</taxon>
        <taxon>Neisseria</taxon>
    </lineage>
</organism>
<name>NQRA_NEIMF</name>
<evidence type="ECO:0000255" key="1">
    <source>
        <dbReference type="HAMAP-Rule" id="MF_00425"/>
    </source>
</evidence>
<comment type="function">
    <text evidence="1">NQR complex catalyzes the reduction of ubiquinone-1 to ubiquinol by two successive reactions, coupled with the transport of Na(+) ions from the cytoplasm to the periplasm. NqrA to NqrE are probably involved in the second step, the conversion of ubisemiquinone to ubiquinol.</text>
</comment>
<comment type="catalytic activity">
    <reaction evidence="1">
        <text>a ubiquinone + n Na(+)(in) + NADH + H(+) = a ubiquinol + n Na(+)(out) + NAD(+)</text>
        <dbReference type="Rhea" id="RHEA:47748"/>
        <dbReference type="Rhea" id="RHEA-COMP:9565"/>
        <dbReference type="Rhea" id="RHEA-COMP:9566"/>
        <dbReference type="ChEBI" id="CHEBI:15378"/>
        <dbReference type="ChEBI" id="CHEBI:16389"/>
        <dbReference type="ChEBI" id="CHEBI:17976"/>
        <dbReference type="ChEBI" id="CHEBI:29101"/>
        <dbReference type="ChEBI" id="CHEBI:57540"/>
        <dbReference type="ChEBI" id="CHEBI:57945"/>
        <dbReference type="EC" id="7.2.1.1"/>
    </reaction>
</comment>
<comment type="subunit">
    <text evidence="1">Composed of six subunits; NqrA, NqrB, NqrC, NqrD, NqrE and NqrF.</text>
</comment>
<comment type="similarity">
    <text evidence="1">Belongs to the NqrA family.</text>
</comment>